<comment type="function">
    <text evidence="1">Involved in resistance toward heavy metals.</text>
</comment>
<comment type="cofactor">
    <cofactor evidence="1">
        <name>Cu cation</name>
        <dbReference type="ChEBI" id="CHEBI:23378"/>
    </cofactor>
    <text evidence="1">Binds 1 copper ion per subunit.</text>
</comment>
<comment type="subunit">
    <text evidence="1">Homotrimer.</text>
</comment>
<comment type="subcellular location">
    <subcellularLocation>
        <location evidence="1">Cytoplasm</location>
    </subcellularLocation>
</comment>
<comment type="similarity">
    <text evidence="1">Belongs to the CutA family.</text>
</comment>
<dbReference type="EMBL" id="CU928162">
    <property type="protein sequence ID" value="CAR10882.1"/>
    <property type="molecule type" value="Genomic_DNA"/>
</dbReference>
<dbReference type="RefSeq" id="WP_000883410.1">
    <property type="nucleotide sequence ID" value="NC_011745.1"/>
</dbReference>
<dbReference type="SMR" id="B7MSF8"/>
<dbReference type="KEGG" id="ecq:ECED1_4925"/>
<dbReference type="HOGENOM" id="CLU_098807_3_0_6"/>
<dbReference type="Proteomes" id="UP000000748">
    <property type="component" value="Chromosome"/>
</dbReference>
<dbReference type="GO" id="GO:0005737">
    <property type="term" value="C:cytoplasm"/>
    <property type="evidence" value="ECO:0007669"/>
    <property type="project" value="UniProtKB-SubCell"/>
</dbReference>
<dbReference type="GO" id="GO:0005507">
    <property type="term" value="F:copper ion binding"/>
    <property type="evidence" value="ECO:0007669"/>
    <property type="project" value="UniProtKB-UniRule"/>
</dbReference>
<dbReference type="GO" id="GO:0010038">
    <property type="term" value="P:response to metal ion"/>
    <property type="evidence" value="ECO:0007669"/>
    <property type="project" value="InterPro"/>
</dbReference>
<dbReference type="FunFam" id="3.30.70.120:FF:000004">
    <property type="entry name" value="Divalent-cation tolerance protein CutA"/>
    <property type="match status" value="1"/>
</dbReference>
<dbReference type="Gene3D" id="3.30.70.120">
    <property type="match status" value="1"/>
</dbReference>
<dbReference type="HAMAP" id="MF_01160">
    <property type="entry name" value="CutA"/>
    <property type="match status" value="1"/>
</dbReference>
<dbReference type="InterPro" id="IPR023700">
    <property type="entry name" value="CutA_Enterobact"/>
</dbReference>
<dbReference type="InterPro" id="IPR004323">
    <property type="entry name" value="Ion_tolerance_CutA"/>
</dbReference>
<dbReference type="InterPro" id="IPR011322">
    <property type="entry name" value="N-reg_PII-like_a/b"/>
</dbReference>
<dbReference type="InterPro" id="IPR015867">
    <property type="entry name" value="N-reg_PII/ATP_PRibTrfase_C"/>
</dbReference>
<dbReference type="NCBIfam" id="NF007930">
    <property type="entry name" value="PRK10645.1"/>
    <property type="match status" value="1"/>
</dbReference>
<dbReference type="PANTHER" id="PTHR23419">
    <property type="entry name" value="DIVALENT CATION TOLERANCE CUTA-RELATED"/>
    <property type="match status" value="1"/>
</dbReference>
<dbReference type="PANTHER" id="PTHR23419:SF8">
    <property type="entry name" value="FI09726P"/>
    <property type="match status" value="1"/>
</dbReference>
<dbReference type="Pfam" id="PF03091">
    <property type="entry name" value="CutA1"/>
    <property type="match status" value="1"/>
</dbReference>
<dbReference type="SUPFAM" id="SSF54913">
    <property type="entry name" value="GlnB-like"/>
    <property type="match status" value="1"/>
</dbReference>
<accession>B7MSF8</accession>
<sequence length="112" mass="12379">MLDEKSSNTTSVVVLCTAPDEATAQDLAAKVLAEKLAACATLIPGATSLYYWEGKLEQEYEVQMILKTTVSHQQAMLECLKSHHPYQTPELLVLPVTHGDTDYLSWLNASLR</sequence>
<organism>
    <name type="scientific">Escherichia coli O81 (strain ED1a)</name>
    <dbReference type="NCBI Taxonomy" id="585397"/>
    <lineage>
        <taxon>Bacteria</taxon>
        <taxon>Pseudomonadati</taxon>
        <taxon>Pseudomonadota</taxon>
        <taxon>Gammaproteobacteria</taxon>
        <taxon>Enterobacterales</taxon>
        <taxon>Enterobacteriaceae</taxon>
        <taxon>Escherichia</taxon>
    </lineage>
</organism>
<feature type="chain" id="PRO_1000164314" description="Divalent-cation tolerance protein CutA">
    <location>
        <begin position="1"/>
        <end position="112"/>
    </location>
</feature>
<feature type="binding site" evidence="1">
    <location>
        <position position="16"/>
    </location>
    <ligand>
        <name>Cu cation</name>
        <dbReference type="ChEBI" id="CHEBI:23378"/>
    </ligand>
</feature>
<feature type="binding site" evidence="1">
    <location>
        <position position="83"/>
    </location>
    <ligand>
        <name>Cu cation</name>
        <dbReference type="ChEBI" id="CHEBI:23378"/>
    </ligand>
</feature>
<feature type="binding site" evidence="1">
    <location>
        <position position="84"/>
    </location>
    <ligand>
        <name>Cu cation</name>
        <dbReference type="ChEBI" id="CHEBI:23378"/>
    </ligand>
</feature>
<evidence type="ECO:0000255" key="1">
    <source>
        <dbReference type="HAMAP-Rule" id="MF_01160"/>
    </source>
</evidence>
<gene>
    <name evidence="1" type="primary">cutA</name>
    <name type="ordered locus">ECED1_4925</name>
</gene>
<keyword id="KW-0186">Copper</keyword>
<keyword id="KW-0963">Cytoplasm</keyword>
<keyword id="KW-0479">Metal-binding</keyword>
<protein>
    <recommendedName>
        <fullName evidence="1">Divalent-cation tolerance protein CutA</fullName>
    </recommendedName>
</protein>
<reference key="1">
    <citation type="journal article" date="2009" name="PLoS Genet.">
        <title>Organised genome dynamics in the Escherichia coli species results in highly diverse adaptive paths.</title>
        <authorList>
            <person name="Touchon M."/>
            <person name="Hoede C."/>
            <person name="Tenaillon O."/>
            <person name="Barbe V."/>
            <person name="Baeriswyl S."/>
            <person name="Bidet P."/>
            <person name="Bingen E."/>
            <person name="Bonacorsi S."/>
            <person name="Bouchier C."/>
            <person name="Bouvet O."/>
            <person name="Calteau A."/>
            <person name="Chiapello H."/>
            <person name="Clermont O."/>
            <person name="Cruveiller S."/>
            <person name="Danchin A."/>
            <person name="Diard M."/>
            <person name="Dossat C."/>
            <person name="Karoui M.E."/>
            <person name="Frapy E."/>
            <person name="Garry L."/>
            <person name="Ghigo J.M."/>
            <person name="Gilles A.M."/>
            <person name="Johnson J."/>
            <person name="Le Bouguenec C."/>
            <person name="Lescat M."/>
            <person name="Mangenot S."/>
            <person name="Martinez-Jehanne V."/>
            <person name="Matic I."/>
            <person name="Nassif X."/>
            <person name="Oztas S."/>
            <person name="Petit M.A."/>
            <person name="Pichon C."/>
            <person name="Rouy Z."/>
            <person name="Ruf C.S."/>
            <person name="Schneider D."/>
            <person name="Tourret J."/>
            <person name="Vacherie B."/>
            <person name="Vallenet D."/>
            <person name="Medigue C."/>
            <person name="Rocha E.P.C."/>
            <person name="Denamur E."/>
        </authorList>
    </citation>
    <scope>NUCLEOTIDE SEQUENCE [LARGE SCALE GENOMIC DNA]</scope>
    <source>
        <strain>ED1a</strain>
    </source>
</reference>
<proteinExistence type="inferred from homology"/>
<name>CUTA_ECO81</name>